<feature type="chain" id="PRO_0000057999" description="Numb-like protein">
    <location>
        <begin position="1"/>
        <end position="609"/>
    </location>
</feature>
<feature type="domain" description="PID" evidence="3">
    <location>
        <begin position="74"/>
        <end position="223"/>
    </location>
</feature>
<feature type="region of interest" description="Disordered" evidence="4">
    <location>
        <begin position="1"/>
        <end position="68"/>
    </location>
</feature>
<feature type="region of interest" description="Disordered" evidence="4">
    <location>
        <begin position="223"/>
        <end position="283"/>
    </location>
</feature>
<feature type="region of interest" description="Disordered" evidence="4">
    <location>
        <begin position="372"/>
        <end position="421"/>
    </location>
</feature>
<feature type="region of interest" description="Disordered" evidence="4">
    <location>
        <begin position="434"/>
        <end position="464"/>
    </location>
</feature>
<feature type="region of interest" description="Disordered" evidence="4">
    <location>
        <begin position="537"/>
        <end position="609"/>
    </location>
</feature>
<feature type="compositionally biased region" description="Pro residues" evidence="4">
    <location>
        <begin position="19"/>
        <end position="29"/>
    </location>
</feature>
<feature type="compositionally biased region" description="Basic and acidic residues" evidence="4">
    <location>
        <begin position="233"/>
        <end position="245"/>
    </location>
</feature>
<feature type="compositionally biased region" description="Low complexity" evidence="4">
    <location>
        <begin position="246"/>
        <end position="259"/>
    </location>
</feature>
<feature type="compositionally biased region" description="Basic and acidic residues" evidence="4">
    <location>
        <begin position="409"/>
        <end position="418"/>
    </location>
</feature>
<feature type="compositionally biased region" description="Low complexity" evidence="4">
    <location>
        <begin position="434"/>
        <end position="446"/>
    </location>
</feature>
<feature type="compositionally biased region" description="Pro residues" evidence="4">
    <location>
        <begin position="454"/>
        <end position="464"/>
    </location>
</feature>
<feature type="compositionally biased region" description="Pro residues" evidence="4">
    <location>
        <begin position="558"/>
        <end position="573"/>
    </location>
</feature>
<feature type="modified residue" description="Phosphoserine" evidence="8">
    <location>
        <position position="224"/>
    </location>
</feature>
<feature type="modified residue" description="Phosphoserine" evidence="8">
    <location>
        <position position="228"/>
    </location>
</feature>
<feature type="modified residue" description="Phosphoserine" evidence="8">
    <location>
        <position position="263"/>
    </location>
</feature>
<feature type="modified residue" description="Phosphothreonine" evidence="7">
    <location>
        <position position="279"/>
    </location>
</feature>
<feature type="modified residue" description="Phosphoserine" evidence="2">
    <location>
        <position position="411"/>
    </location>
</feature>
<feature type="turn" evidence="9">
    <location>
        <begin position="64"/>
        <end position="66"/>
    </location>
</feature>
<feature type="helix" evidence="9">
    <location>
        <begin position="67"/>
        <end position="74"/>
    </location>
</feature>
<feature type="strand" evidence="9">
    <location>
        <begin position="78"/>
        <end position="91"/>
    </location>
</feature>
<feature type="helix" evidence="9">
    <location>
        <begin position="96"/>
        <end position="107"/>
    </location>
</feature>
<feature type="strand" evidence="9">
    <location>
        <begin position="114"/>
        <end position="120"/>
    </location>
</feature>
<feature type="strand" evidence="9">
    <location>
        <begin position="122"/>
        <end position="129"/>
    </location>
</feature>
<feature type="turn" evidence="9">
    <location>
        <begin position="130"/>
        <end position="132"/>
    </location>
</feature>
<feature type="strand" evidence="9">
    <location>
        <begin position="135"/>
        <end position="140"/>
    </location>
</feature>
<feature type="helix" evidence="9">
    <location>
        <begin position="141"/>
        <end position="143"/>
    </location>
</feature>
<feature type="strand" evidence="9">
    <location>
        <begin position="144"/>
        <end position="149"/>
    </location>
</feature>
<feature type="strand" evidence="9">
    <location>
        <begin position="156"/>
        <end position="163"/>
    </location>
</feature>
<feature type="turn" evidence="9">
    <location>
        <begin position="164"/>
        <end position="167"/>
    </location>
</feature>
<feature type="strand" evidence="9">
    <location>
        <begin position="168"/>
        <end position="179"/>
    </location>
</feature>
<feature type="helix" evidence="9">
    <location>
        <begin position="181"/>
        <end position="201"/>
    </location>
</feature>
<sequence>MSRSAAASGGPRRPERHLPPAPCGAPGPPETCRTEPDGAGTMNKLRQSLRRRKPAYVPEASRPHQWQADEDAVRKGTCSFPVRYLGHVEVEESRGMHVCEDAVKKLKAMGRKSVKSVLWVSADGLRVVDDKTKDLLVDQTIEKVSFCAPDRNLDKAFSYICRDGTTRRWICHCFLALKDSGERLSHAVGCAFAACLERKQRREKECGVTAAFDASRTSFAREGSFRLSGGGRPAEREAPDKKKAEAAAAPTVAPGPAQPGHVSPTPATTSPGEKGEAGTPVAAGTTAAAIPRRHAPLEQLVRQGSFRGFPALSQKNSPFKRQLSLRLNELPSTLQRRTDFQVKGTVPEMEPPGAGDSDSINALCTQISSSFASAGAPAPGPPPATTGTSAWGEPSVPPAAAFQPGHKRTPSEAERWLEEVSQVAKAQQQQQQQQQQQQQQQQQQQQAASVAPVPTMPPALQPFPAPVGPFDAAPAQVAVFLPPPHMQPPFVPAYPGLGYPPMPRVPVVGITPSQMVANAFCSAAQLQPQPATLLGKAGAFPPPAIPSAPGSQARPRPNGAPWPPEPAPAPAPELDPFEAQWAALEGKATVEKPSNPFSGDLQKTFEIEL</sequence>
<reference key="1">
    <citation type="journal article" date="1997" name="Genes Dev.">
        <title>Binding specificity and in vivo targets of the EH domain, a novel protein-protein interaction module.</title>
        <authorList>
            <person name="Salcini A.E."/>
            <person name="Confalonieri S."/>
            <person name="Doria M."/>
            <person name="Santolini E."/>
            <person name="Tassi E."/>
            <person name="Minenkova O."/>
            <person name="Cesareni G."/>
            <person name="Pelicci P.G."/>
            <person name="Di Fiore P.P."/>
        </authorList>
    </citation>
    <scope>NUCLEOTIDE SEQUENCE [MRNA]</scope>
</reference>
<reference key="2">
    <citation type="journal article" date="2004" name="Genome Res.">
        <title>The status, quality, and expansion of the NIH full-length cDNA project: the Mammalian Gene Collection (MGC).</title>
        <authorList>
            <consortium name="The MGC Project Team"/>
        </authorList>
    </citation>
    <scope>NUCLEOTIDE SEQUENCE [LARGE SCALE MRNA] OF 9-609</scope>
    <source>
        <tissue>Eye</tissue>
    </source>
</reference>
<reference key="3">
    <citation type="submission" date="2003-08" db="EMBL/GenBank/DDBJ databases">
        <title>Cloning of human full-length CDSs in BD Creator(TM) system donor vector.</title>
        <authorList>
            <person name="Kalnine N."/>
            <person name="Chen X."/>
            <person name="Rolfs A."/>
            <person name="Halleck A."/>
            <person name="Hines L."/>
            <person name="Eisenstein S."/>
            <person name="Koundinya M."/>
            <person name="Raphael J."/>
            <person name="Moreira D."/>
            <person name="Kelley T."/>
            <person name="LaBaer J."/>
            <person name="Lin Y."/>
            <person name="Phelan M."/>
            <person name="Farmer A."/>
        </authorList>
    </citation>
    <scope>NUCLEOTIDE SEQUENCE [LARGE SCALE MRNA] OF 42-609</scope>
</reference>
<reference key="4">
    <citation type="journal article" date="2006" name="Cell">
        <title>Global, in vivo, and site-specific phosphorylation dynamics in signaling networks.</title>
        <authorList>
            <person name="Olsen J.V."/>
            <person name="Blagoev B."/>
            <person name="Gnad F."/>
            <person name="Macek B."/>
            <person name="Kumar C."/>
            <person name="Mortensen P."/>
            <person name="Mann M."/>
        </authorList>
    </citation>
    <scope>IDENTIFICATION BY MASS SPECTROMETRY [LARGE SCALE ANALYSIS]</scope>
    <source>
        <tissue>Cervix carcinoma</tissue>
    </source>
</reference>
<reference key="5">
    <citation type="journal article" date="2008" name="Cell. Signal.">
        <title>NUMBL interacts with TAB2 and inhibits TNFalpha and IL-1beta-induced NF-kappaB activation.</title>
        <authorList>
            <person name="Ma Q."/>
            <person name="Zhou L."/>
            <person name="Shi H."/>
            <person name="Huo K."/>
        </authorList>
    </citation>
    <scope>FUNCTION</scope>
    <scope>INTERACTION WITH MAP3K7IP2</scope>
    <scope>SUBCELLULAR LOCATION</scope>
</reference>
<reference key="6">
    <citation type="journal article" date="2008" name="Proc. Natl. Acad. Sci. U.S.A.">
        <title>A quantitative atlas of mitotic phosphorylation.</title>
        <authorList>
            <person name="Dephoure N."/>
            <person name="Zhou C."/>
            <person name="Villen J."/>
            <person name="Beausoleil S.A."/>
            <person name="Bakalarski C.E."/>
            <person name="Elledge S.J."/>
            <person name="Gygi S.P."/>
        </authorList>
    </citation>
    <scope>PHOSPHORYLATION [LARGE SCALE ANALYSIS] AT THR-279</scope>
    <scope>IDENTIFICATION BY MASS SPECTROMETRY [LARGE SCALE ANALYSIS]</scope>
    <source>
        <tissue>Cervix carcinoma</tissue>
    </source>
</reference>
<reference key="7">
    <citation type="journal article" date="2010" name="Biochem. Biophys. Res. Commun.">
        <title>NUMBL interacts with TRAF6 and promotes the degradation of TRAF6.</title>
        <authorList>
            <person name="Zhou L."/>
            <person name="Ma Q."/>
            <person name="Shi H."/>
            <person name="Huo K."/>
        </authorList>
    </citation>
    <scope>FUNCTION</scope>
    <scope>INTERACTION WITH TRAF6</scope>
</reference>
<reference key="8">
    <citation type="journal article" date="2010" name="Sci. Signal.">
        <title>Quantitative phosphoproteomics reveals widespread full phosphorylation site occupancy during mitosis.</title>
        <authorList>
            <person name="Olsen J.V."/>
            <person name="Vermeulen M."/>
            <person name="Santamaria A."/>
            <person name="Kumar C."/>
            <person name="Miller M.L."/>
            <person name="Jensen L.J."/>
            <person name="Gnad F."/>
            <person name="Cox J."/>
            <person name="Jensen T.S."/>
            <person name="Nigg E.A."/>
            <person name="Brunak S."/>
            <person name="Mann M."/>
        </authorList>
    </citation>
    <scope>IDENTIFICATION BY MASS SPECTROMETRY [LARGE SCALE ANALYSIS]</scope>
    <source>
        <tissue>Cervix carcinoma</tissue>
    </source>
</reference>
<reference key="9">
    <citation type="journal article" date="2013" name="J. Proteome Res.">
        <title>Toward a comprehensive characterization of a human cancer cell phosphoproteome.</title>
        <authorList>
            <person name="Zhou H."/>
            <person name="Di Palma S."/>
            <person name="Preisinger C."/>
            <person name="Peng M."/>
            <person name="Polat A.N."/>
            <person name="Heck A.J."/>
            <person name="Mohammed S."/>
        </authorList>
    </citation>
    <scope>PHOSPHORYLATION [LARGE SCALE ANALYSIS] AT SER-224; SER-228 AND SER-263</scope>
    <scope>IDENTIFICATION BY MASS SPECTROMETRY [LARGE SCALE ANALYSIS]</scope>
    <source>
        <tissue>Cervix carcinoma</tissue>
        <tissue>Erythroleukemia</tissue>
    </source>
</reference>
<reference key="10">
    <citation type="submission" date="2009-02" db="PDB data bank">
        <title>Human numb-like protein, phosphotyrosine interaction domain.</title>
        <authorList>
            <consortium name="Structural genomics consortium (SGC)"/>
        </authorList>
    </citation>
    <scope>X-RAY CRYSTALLOGRAPHY (2.7 ANGSTROMS) OF 60-204</scope>
</reference>
<gene>
    <name type="primary">NUMBL</name>
</gene>
<dbReference type="EMBL" id="AF015041">
    <property type="protein sequence ID" value="AAD01549.1"/>
    <property type="molecule type" value="mRNA"/>
</dbReference>
<dbReference type="EMBL" id="BC001794">
    <property type="status" value="NOT_ANNOTATED_CDS"/>
    <property type="molecule type" value="mRNA"/>
</dbReference>
<dbReference type="EMBL" id="BT009807">
    <property type="protein sequence ID" value="AAP88809.1"/>
    <property type="molecule type" value="mRNA"/>
</dbReference>
<dbReference type="CCDS" id="CCDS12561.1"/>
<dbReference type="RefSeq" id="NP_001276908.1">
    <property type="nucleotide sequence ID" value="NM_001289979.1"/>
</dbReference>
<dbReference type="RefSeq" id="NP_001276909.1">
    <property type="nucleotide sequence ID" value="NM_001289980.2"/>
</dbReference>
<dbReference type="RefSeq" id="NP_004747.1">
    <property type="nucleotide sequence ID" value="NM_004756.5"/>
</dbReference>
<dbReference type="PDB" id="3F0W">
    <property type="method" value="X-ray"/>
    <property type="resolution" value="2.70 A"/>
    <property type="chains" value="A=60-204"/>
</dbReference>
<dbReference type="PDBsum" id="3F0W"/>
<dbReference type="SMR" id="Q9Y6R0"/>
<dbReference type="BioGRID" id="114677">
    <property type="interactions" value="115"/>
</dbReference>
<dbReference type="ELM" id="Q9Y6R0"/>
<dbReference type="FunCoup" id="Q9Y6R0">
    <property type="interactions" value="1216"/>
</dbReference>
<dbReference type="IntAct" id="Q9Y6R0">
    <property type="interactions" value="53"/>
</dbReference>
<dbReference type="MINT" id="Q9Y6R0"/>
<dbReference type="STRING" id="9606.ENSP00000252891"/>
<dbReference type="GlyCosmos" id="Q9Y6R0">
    <property type="glycosylation" value="1 site, 1 glycan"/>
</dbReference>
<dbReference type="GlyGen" id="Q9Y6R0">
    <property type="glycosylation" value="2 sites, 1 O-linked glycan (1 site)"/>
</dbReference>
<dbReference type="iPTMnet" id="Q9Y6R0"/>
<dbReference type="MetOSite" id="Q9Y6R0"/>
<dbReference type="PhosphoSitePlus" id="Q9Y6R0"/>
<dbReference type="BioMuta" id="NUMBL"/>
<dbReference type="DMDM" id="14194976"/>
<dbReference type="jPOST" id="Q9Y6R0"/>
<dbReference type="MassIVE" id="Q9Y6R0"/>
<dbReference type="PaxDb" id="9606-ENSP00000252891"/>
<dbReference type="PeptideAtlas" id="Q9Y6R0"/>
<dbReference type="ProteomicsDB" id="86771"/>
<dbReference type="Pumba" id="Q9Y6R0"/>
<dbReference type="Antibodypedia" id="30612">
    <property type="antibodies" value="269 antibodies from 31 providers"/>
</dbReference>
<dbReference type="DNASU" id="9253"/>
<dbReference type="Ensembl" id="ENST00000252891.8">
    <property type="protein sequence ID" value="ENSP00000252891.3"/>
    <property type="gene ID" value="ENSG00000105245.9"/>
</dbReference>
<dbReference type="GeneID" id="9253"/>
<dbReference type="KEGG" id="hsa:9253"/>
<dbReference type="MANE-Select" id="ENST00000252891.8">
    <property type="protein sequence ID" value="ENSP00000252891.3"/>
    <property type="RefSeq nucleotide sequence ID" value="NM_004756.5"/>
    <property type="RefSeq protein sequence ID" value="NP_004747.1"/>
</dbReference>
<dbReference type="UCSC" id="uc002oon.5">
    <property type="organism name" value="human"/>
</dbReference>
<dbReference type="AGR" id="HGNC:8061"/>
<dbReference type="CTD" id="9253"/>
<dbReference type="DisGeNET" id="9253"/>
<dbReference type="GeneCards" id="NUMBL"/>
<dbReference type="HGNC" id="HGNC:8061">
    <property type="gene designation" value="NUMBL"/>
</dbReference>
<dbReference type="HPA" id="ENSG00000105245">
    <property type="expression patterns" value="Low tissue specificity"/>
</dbReference>
<dbReference type="MalaCards" id="NUMBL"/>
<dbReference type="MIM" id="604018">
    <property type="type" value="gene"/>
</dbReference>
<dbReference type="neXtProt" id="NX_Q9Y6R0"/>
<dbReference type="OpenTargets" id="ENSG00000105245"/>
<dbReference type="PharmGKB" id="PA31846"/>
<dbReference type="VEuPathDB" id="HostDB:ENSG00000105245"/>
<dbReference type="eggNOG" id="KOG3537">
    <property type="taxonomic scope" value="Eukaryota"/>
</dbReference>
<dbReference type="GeneTree" id="ENSGT00940000160957"/>
<dbReference type="InParanoid" id="Q9Y6R0"/>
<dbReference type="OMA" id="PWMSRSA"/>
<dbReference type="OrthoDB" id="10070446at2759"/>
<dbReference type="PAN-GO" id="Q9Y6R0">
    <property type="GO annotations" value="1 GO annotation based on evolutionary models"/>
</dbReference>
<dbReference type="PhylomeDB" id="Q9Y6R0"/>
<dbReference type="TreeFam" id="TF314159"/>
<dbReference type="PathwayCommons" id="Q9Y6R0"/>
<dbReference type="SignaLink" id="Q9Y6R0"/>
<dbReference type="BioGRID-ORCS" id="9253">
    <property type="hits" value="111 hits in 1157 CRISPR screens"/>
</dbReference>
<dbReference type="CD-CODE" id="FB4E32DD">
    <property type="entry name" value="Presynaptic clusters and postsynaptic densities"/>
</dbReference>
<dbReference type="ChiTaRS" id="NUMBL">
    <property type="organism name" value="human"/>
</dbReference>
<dbReference type="EvolutionaryTrace" id="Q9Y6R0"/>
<dbReference type="GeneWiki" id="NUMBL"/>
<dbReference type="GenomeRNAi" id="9253"/>
<dbReference type="Pharos" id="Q9Y6R0">
    <property type="development level" value="Tbio"/>
</dbReference>
<dbReference type="PRO" id="PR:Q9Y6R0"/>
<dbReference type="Proteomes" id="UP000005640">
    <property type="component" value="Chromosome 19"/>
</dbReference>
<dbReference type="RNAct" id="Q9Y6R0">
    <property type="molecule type" value="protein"/>
</dbReference>
<dbReference type="Bgee" id="ENSG00000105245">
    <property type="expression patterns" value="Expressed in pancreatic ductal cell and 186 other cell types or tissues"/>
</dbReference>
<dbReference type="ExpressionAtlas" id="Q9Y6R0">
    <property type="expression patterns" value="baseline and differential"/>
</dbReference>
<dbReference type="GO" id="GO:0005737">
    <property type="term" value="C:cytoplasm"/>
    <property type="evidence" value="ECO:0000318"/>
    <property type="project" value="GO_Central"/>
</dbReference>
<dbReference type="GO" id="GO:0098978">
    <property type="term" value="C:glutamatergic synapse"/>
    <property type="evidence" value="ECO:0007669"/>
    <property type="project" value="Ensembl"/>
</dbReference>
<dbReference type="GO" id="GO:0034332">
    <property type="term" value="P:adherens junction organization"/>
    <property type="evidence" value="ECO:0007669"/>
    <property type="project" value="Ensembl"/>
</dbReference>
<dbReference type="GO" id="GO:0007409">
    <property type="term" value="P:axonogenesis"/>
    <property type="evidence" value="ECO:0007669"/>
    <property type="project" value="Ensembl"/>
</dbReference>
<dbReference type="GO" id="GO:0019221">
    <property type="term" value="P:cytokine-mediated signaling pathway"/>
    <property type="evidence" value="ECO:0000314"/>
    <property type="project" value="UniProtKB"/>
</dbReference>
<dbReference type="GO" id="GO:0021670">
    <property type="term" value="P:lateral ventricle development"/>
    <property type="evidence" value="ECO:0000250"/>
    <property type="project" value="UniProtKB"/>
</dbReference>
<dbReference type="GO" id="GO:0007399">
    <property type="term" value="P:nervous system development"/>
    <property type="evidence" value="ECO:0000304"/>
    <property type="project" value="ProtInc"/>
</dbReference>
<dbReference type="GO" id="GO:0021849">
    <property type="term" value="P:neuroblast division in subventricular zone"/>
    <property type="evidence" value="ECO:0000250"/>
    <property type="project" value="UniProtKB"/>
</dbReference>
<dbReference type="GO" id="GO:0050775">
    <property type="term" value="P:positive regulation of dendrite morphogenesis"/>
    <property type="evidence" value="ECO:0007669"/>
    <property type="project" value="Ensembl"/>
</dbReference>
<dbReference type="GO" id="GO:0050769">
    <property type="term" value="P:positive regulation of neurogenesis"/>
    <property type="evidence" value="ECO:0000250"/>
    <property type="project" value="UniProtKB"/>
</dbReference>
<dbReference type="GO" id="GO:0019538">
    <property type="term" value="P:protein metabolic process"/>
    <property type="evidence" value="ECO:0000314"/>
    <property type="project" value="UniProtKB"/>
</dbReference>
<dbReference type="GO" id="GO:0150052">
    <property type="term" value="P:regulation of postsynapse assembly"/>
    <property type="evidence" value="ECO:0007669"/>
    <property type="project" value="Ensembl"/>
</dbReference>
<dbReference type="CDD" id="cd01268">
    <property type="entry name" value="PTB_Numb"/>
    <property type="match status" value="1"/>
</dbReference>
<dbReference type="FunFam" id="2.30.29.30:FF:000031">
    <property type="entry name" value="protein numb isoform X1"/>
    <property type="match status" value="1"/>
</dbReference>
<dbReference type="Gene3D" id="2.30.29.30">
    <property type="entry name" value="Pleckstrin-homology domain (PH domain)/Phosphotyrosine-binding domain (PTB)"/>
    <property type="match status" value="1"/>
</dbReference>
<dbReference type="InterPro" id="IPR016698">
    <property type="entry name" value="Numb/numb-like"/>
</dbReference>
<dbReference type="InterPro" id="IPR010449">
    <property type="entry name" value="Numb_domain"/>
</dbReference>
<dbReference type="InterPro" id="IPR011993">
    <property type="entry name" value="PH-like_dom_sf"/>
</dbReference>
<dbReference type="InterPro" id="IPR006020">
    <property type="entry name" value="PTB/PI_dom"/>
</dbReference>
<dbReference type="PANTHER" id="PTHR47368">
    <property type="entry name" value="NUMB"/>
    <property type="match status" value="1"/>
</dbReference>
<dbReference type="PANTHER" id="PTHR47368:SF4">
    <property type="entry name" value="NUMB-LIKE PROTEIN"/>
    <property type="match status" value="1"/>
</dbReference>
<dbReference type="Pfam" id="PF06311">
    <property type="entry name" value="NumbF"/>
    <property type="match status" value="1"/>
</dbReference>
<dbReference type="Pfam" id="PF00640">
    <property type="entry name" value="PID"/>
    <property type="match status" value="1"/>
</dbReference>
<dbReference type="PIRSF" id="PIRSF017607">
    <property type="entry name" value="Numb/numb-like"/>
    <property type="match status" value="1"/>
</dbReference>
<dbReference type="SMART" id="SM00462">
    <property type="entry name" value="PTB"/>
    <property type="match status" value="1"/>
</dbReference>
<dbReference type="SUPFAM" id="SSF50729">
    <property type="entry name" value="PH domain-like"/>
    <property type="match status" value="1"/>
</dbReference>
<dbReference type="PROSITE" id="PS01179">
    <property type="entry name" value="PID"/>
    <property type="match status" value="1"/>
</dbReference>
<comment type="function">
    <text evidence="5 6">Plays a role in the process of neurogenesis. Required throughout embryonic neurogenesis to maintain neural progenitor cells, also called radial glial cells (RGCs), by allowing their daughter cells to choose progenitor over neuronal cell fate. Not required for the proliferation of neural progenitor cells before the onset of embryonic neurogenesis. Also required postnatally in the subventricular zone (SVZ) neurogenesis by regulating SVZ neuroblasts survival and ependymal wall integrity. Negative regulator of NF-kappa-B signaling pathway. The inhibition of NF-kappa-B activation is mediated at least in part, by preventing MAP3K7IP2 to interact with polyubiquitin chains of TRAF6 and RIPK1 and by stimulating the 'Lys-48'-linked polyubiquitination and degradation of TRAF6 in cortical neurons.</text>
</comment>
<comment type="subunit">
    <text evidence="5 6">Interacts (via PTB domain) with MAP3K7IP2 (via C-terminal). Interacts (via C-terminal) with TRAF6 (via TRAF domains). Associates with EPS15 and NOTCH1.</text>
</comment>
<comment type="interaction">
    <interactant intactId="EBI-945925">
        <id>Q9Y6R0</id>
    </interactant>
    <interactant intactId="EBI-1041567">
        <id>Q00535</id>
        <label>CDK5</label>
    </interactant>
    <organismsDiffer>false</organismsDiffer>
    <experiments>3</experiments>
</comment>
<comment type="interaction">
    <interactant intactId="EBI-945925">
        <id>Q9Y6R0</id>
    </interactant>
    <interactant intactId="EBI-16041593">
        <id>O94985-2</id>
        <label>CLSTN1</label>
    </interactant>
    <organismsDiffer>false</organismsDiffer>
    <experiments>3</experiments>
</comment>
<comment type="interaction">
    <interactant intactId="EBI-945925">
        <id>Q9Y6R0</id>
    </interactant>
    <interactant intactId="EBI-297353">
        <id>P00533</id>
        <label>EGFR</label>
    </interactant>
    <organismsDiffer>false</organismsDiffer>
    <experiments>2</experiments>
</comment>
<comment type="interaction">
    <interactant intactId="EBI-945925">
        <id>Q9Y6R0</id>
    </interactant>
    <interactant intactId="EBI-9090282">
        <id>P27986-2</id>
        <label>PIK3R1</label>
    </interactant>
    <organismsDiffer>false</organismsDiffer>
    <experiments>3</experiments>
</comment>
<comment type="interaction">
    <interactant intactId="EBI-945925">
        <id>Q9Y6R0</id>
    </interactant>
    <interactant intactId="EBI-945906">
        <id>Q9NWB1</id>
        <label>RBFOX1</label>
    </interactant>
    <organismsDiffer>false</organismsDiffer>
    <experiments>2</experiments>
</comment>
<comment type="interaction">
    <interactant intactId="EBI-945925">
        <id>Q9Y6R0</id>
    </interactant>
    <interactant intactId="EBI-3937206">
        <id>Q6PJ21</id>
        <label>SPSB3</label>
    </interactant>
    <organismsDiffer>false</organismsDiffer>
    <experiments>5</experiments>
</comment>
<comment type="subcellular location">
    <subcellularLocation>
        <location evidence="1">Cytoplasm</location>
    </subcellularLocation>
    <text evidence="1">Symmetrically distributed throughout the cytoplasm in non dividing neuroblasts of the CNS.</text>
</comment>
<comment type="domain">
    <text>The PTB domain is necessary for the inhibition of MAP3K7IP2-mediated activation of NF-kappa-B.</text>
</comment>
<proteinExistence type="evidence at protein level"/>
<organism>
    <name type="scientific">Homo sapiens</name>
    <name type="common">Human</name>
    <dbReference type="NCBI Taxonomy" id="9606"/>
    <lineage>
        <taxon>Eukaryota</taxon>
        <taxon>Metazoa</taxon>
        <taxon>Chordata</taxon>
        <taxon>Craniata</taxon>
        <taxon>Vertebrata</taxon>
        <taxon>Euteleostomi</taxon>
        <taxon>Mammalia</taxon>
        <taxon>Eutheria</taxon>
        <taxon>Euarchontoglires</taxon>
        <taxon>Primates</taxon>
        <taxon>Haplorrhini</taxon>
        <taxon>Catarrhini</taxon>
        <taxon>Hominidae</taxon>
        <taxon>Homo</taxon>
    </lineage>
</organism>
<protein>
    <recommendedName>
        <fullName>Numb-like protein</fullName>
    </recommendedName>
    <alternativeName>
        <fullName>Numb-related protein</fullName>
        <shortName>Numb-R</shortName>
    </alternativeName>
</protein>
<keyword id="KW-0002">3D-structure</keyword>
<keyword id="KW-0963">Cytoplasm</keyword>
<keyword id="KW-0217">Developmental protein</keyword>
<keyword id="KW-0524">Neurogenesis</keyword>
<keyword id="KW-0597">Phosphoprotein</keyword>
<keyword id="KW-1267">Proteomics identification</keyword>
<keyword id="KW-1185">Reference proteome</keyword>
<keyword id="KW-0833">Ubl conjugation pathway</keyword>
<name>NUMBL_HUMAN</name>
<evidence type="ECO:0000250" key="1"/>
<evidence type="ECO:0000250" key="2">
    <source>
        <dbReference type="UniProtKB" id="O08919"/>
    </source>
</evidence>
<evidence type="ECO:0000255" key="3">
    <source>
        <dbReference type="PROSITE-ProRule" id="PRU00148"/>
    </source>
</evidence>
<evidence type="ECO:0000256" key="4">
    <source>
        <dbReference type="SAM" id="MobiDB-lite"/>
    </source>
</evidence>
<evidence type="ECO:0000269" key="5">
    <source>
    </source>
</evidence>
<evidence type="ECO:0000269" key="6">
    <source>
    </source>
</evidence>
<evidence type="ECO:0007744" key="7">
    <source>
    </source>
</evidence>
<evidence type="ECO:0007744" key="8">
    <source>
    </source>
</evidence>
<evidence type="ECO:0007829" key="9">
    <source>
        <dbReference type="PDB" id="3F0W"/>
    </source>
</evidence>
<accession>Q9Y6R0</accession>
<accession>Q7Z4J9</accession>